<dbReference type="EC" id="3.1.26.4" evidence="1"/>
<dbReference type="EMBL" id="AE014074">
    <property type="protein sequence ID" value="AAM79425.1"/>
    <property type="molecule type" value="Genomic_DNA"/>
</dbReference>
<dbReference type="RefSeq" id="WP_011054500.1">
    <property type="nucleotide sequence ID" value="NC_004070.1"/>
</dbReference>
<dbReference type="SMR" id="P0DF16"/>
<dbReference type="KEGG" id="spg:SpyM3_0818"/>
<dbReference type="HOGENOM" id="CLU_036532_2_1_9"/>
<dbReference type="Proteomes" id="UP000000564">
    <property type="component" value="Chromosome"/>
</dbReference>
<dbReference type="GO" id="GO:0005737">
    <property type="term" value="C:cytoplasm"/>
    <property type="evidence" value="ECO:0007669"/>
    <property type="project" value="UniProtKB-SubCell"/>
</dbReference>
<dbReference type="GO" id="GO:0032299">
    <property type="term" value="C:ribonuclease H2 complex"/>
    <property type="evidence" value="ECO:0007669"/>
    <property type="project" value="TreeGrafter"/>
</dbReference>
<dbReference type="GO" id="GO:0030145">
    <property type="term" value="F:manganese ion binding"/>
    <property type="evidence" value="ECO:0007669"/>
    <property type="project" value="UniProtKB-UniRule"/>
</dbReference>
<dbReference type="GO" id="GO:0003723">
    <property type="term" value="F:RNA binding"/>
    <property type="evidence" value="ECO:0007669"/>
    <property type="project" value="InterPro"/>
</dbReference>
<dbReference type="GO" id="GO:0004523">
    <property type="term" value="F:RNA-DNA hybrid ribonuclease activity"/>
    <property type="evidence" value="ECO:0007669"/>
    <property type="project" value="UniProtKB-UniRule"/>
</dbReference>
<dbReference type="GO" id="GO:0043137">
    <property type="term" value="P:DNA replication, removal of RNA primer"/>
    <property type="evidence" value="ECO:0007669"/>
    <property type="project" value="TreeGrafter"/>
</dbReference>
<dbReference type="GO" id="GO:0006298">
    <property type="term" value="P:mismatch repair"/>
    <property type="evidence" value="ECO:0007669"/>
    <property type="project" value="TreeGrafter"/>
</dbReference>
<dbReference type="CDD" id="cd07182">
    <property type="entry name" value="RNase_HII_bacteria_HII_like"/>
    <property type="match status" value="1"/>
</dbReference>
<dbReference type="FunFam" id="3.30.420.10:FF:000006">
    <property type="entry name" value="Ribonuclease HII"/>
    <property type="match status" value="1"/>
</dbReference>
<dbReference type="Gene3D" id="3.30.420.10">
    <property type="entry name" value="Ribonuclease H-like superfamily/Ribonuclease H"/>
    <property type="match status" value="1"/>
</dbReference>
<dbReference type="HAMAP" id="MF_00052_B">
    <property type="entry name" value="RNase_HII_B"/>
    <property type="match status" value="1"/>
</dbReference>
<dbReference type="InterPro" id="IPR022898">
    <property type="entry name" value="RNase_HII"/>
</dbReference>
<dbReference type="InterPro" id="IPR001352">
    <property type="entry name" value="RNase_HII/HIII"/>
</dbReference>
<dbReference type="InterPro" id="IPR024567">
    <property type="entry name" value="RNase_HII/HIII_dom"/>
</dbReference>
<dbReference type="InterPro" id="IPR012337">
    <property type="entry name" value="RNaseH-like_sf"/>
</dbReference>
<dbReference type="InterPro" id="IPR036397">
    <property type="entry name" value="RNaseH_sf"/>
</dbReference>
<dbReference type="NCBIfam" id="NF000594">
    <property type="entry name" value="PRK00015.1-1"/>
    <property type="match status" value="1"/>
</dbReference>
<dbReference type="NCBIfam" id="NF000595">
    <property type="entry name" value="PRK00015.1-3"/>
    <property type="match status" value="1"/>
</dbReference>
<dbReference type="PANTHER" id="PTHR10954">
    <property type="entry name" value="RIBONUCLEASE H2 SUBUNIT A"/>
    <property type="match status" value="1"/>
</dbReference>
<dbReference type="PANTHER" id="PTHR10954:SF18">
    <property type="entry name" value="RIBONUCLEASE HII"/>
    <property type="match status" value="1"/>
</dbReference>
<dbReference type="Pfam" id="PF01351">
    <property type="entry name" value="RNase_HII"/>
    <property type="match status" value="1"/>
</dbReference>
<dbReference type="SUPFAM" id="SSF53098">
    <property type="entry name" value="Ribonuclease H-like"/>
    <property type="match status" value="1"/>
</dbReference>
<dbReference type="PROSITE" id="PS51975">
    <property type="entry name" value="RNASE_H_2"/>
    <property type="match status" value="1"/>
</dbReference>
<gene>
    <name evidence="1" type="primary">rnhB</name>
    <name type="ordered locus">SpyM3_0818</name>
</gene>
<keyword id="KW-0963">Cytoplasm</keyword>
<keyword id="KW-0255">Endonuclease</keyword>
<keyword id="KW-0378">Hydrolase</keyword>
<keyword id="KW-0464">Manganese</keyword>
<keyword id="KW-0479">Metal-binding</keyword>
<keyword id="KW-0540">Nuclease</keyword>
<accession>P0DF16</accession>
<accession>Q8K7G7</accession>
<proteinExistence type="inferred from homology"/>
<evidence type="ECO:0000255" key="1">
    <source>
        <dbReference type="HAMAP-Rule" id="MF_00052"/>
    </source>
</evidence>
<evidence type="ECO:0000255" key="2">
    <source>
        <dbReference type="PROSITE-ProRule" id="PRU01319"/>
    </source>
</evidence>
<comment type="function">
    <text evidence="1">Endonuclease that specifically degrades the RNA of RNA-DNA hybrids.</text>
</comment>
<comment type="catalytic activity">
    <reaction evidence="1">
        <text>Endonucleolytic cleavage to 5'-phosphomonoester.</text>
        <dbReference type="EC" id="3.1.26.4"/>
    </reaction>
</comment>
<comment type="cofactor">
    <cofactor evidence="1">
        <name>Mn(2+)</name>
        <dbReference type="ChEBI" id="CHEBI:29035"/>
    </cofactor>
    <cofactor evidence="1">
        <name>Mg(2+)</name>
        <dbReference type="ChEBI" id="CHEBI:18420"/>
    </cofactor>
    <text evidence="1">Manganese or magnesium. Binds 1 divalent metal ion per monomer in the absence of substrate. May bind a second metal ion after substrate binding.</text>
</comment>
<comment type="subcellular location">
    <subcellularLocation>
        <location evidence="1">Cytoplasm</location>
    </subcellularLocation>
</comment>
<comment type="similarity">
    <text evidence="1">Belongs to the RNase HII family.</text>
</comment>
<protein>
    <recommendedName>
        <fullName evidence="1">Ribonuclease HII</fullName>
        <shortName evidence="1">RNase HII</shortName>
        <ecNumber evidence="1">3.1.26.4</ecNumber>
    </recommendedName>
</protein>
<organism>
    <name type="scientific">Streptococcus pyogenes serotype M3 (strain ATCC BAA-595 / MGAS315)</name>
    <dbReference type="NCBI Taxonomy" id="198466"/>
    <lineage>
        <taxon>Bacteria</taxon>
        <taxon>Bacillati</taxon>
        <taxon>Bacillota</taxon>
        <taxon>Bacilli</taxon>
        <taxon>Lactobacillales</taxon>
        <taxon>Streptococcaceae</taxon>
        <taxon>Streptococcus</taxon>
    </lineage>
</organism>
<reference key="1">
    <citation type="journal article" date="2002" name="Proc. Natl. Acad. Sci. U.S.A.">
        <title>Genome sequence of a serotype M3 strain of group A Streptococcus: phage-encoded toxins, the high-virulence phenotype, and clone emergence.</title>
        <authorList>
            <person name="Beres S.B."/>
            <person name="Sylva G.L."/>
            <person name="Barbian K.D."/>
            <person name="Lei B."/>
            <person name="Hoff J.S."/>
            <person name="Mammarella N.D."/>
            <person name="Liu M.-Y."/>
            <person name="Smoot J.C."/>
            <person name="Porcella S.F."/>
            <person name="Parkins L.D."/>
            <person name="Campbell D.S."/>
            <person name="Smith T.M."/>
            <person name="McCormick J.K."/>
            <person name="Leung D.Y.M."/>
            <person name="Schlievert P.M."/>
            <person name="Musser J.M."/>
        </authorList>
    </citation>
    <scope>NUCLEOTIDE SEQUENCE [LARGE SCALE GENOMIC DNA]</scope>
    <source>
        <strain>ATCC BAA-595 / MGAS315</strain>
    </source>
</reference>
<sequence>MPTSIKAIKESLEAVTSLLDPLFQELATDTRSGVQKALKSRQKAIQADLAEEERLEAMLSYEKALYKEGYQAIAGIDEVGRGPLAGPVVAACVILPQHCKIKGLNDSKKIPKAKHETIYQAVKEKALAIGIGIIDNQLIDEVNIYEATKLAMLEAIKQLEGQLTQPDYLLIDAMTLDIAISQQSILKGDANSLSIAAASIVAKVTRDQMMANYDRIFPGYGFAKNAGYGTKEHLQELKAYGITPIHRKSFEPVKSMCCDSTNP</sequence>
<name>RNH2_STRP3</name>
<feature type="chain" id="PRO_0000111637" description="Ribonuclease HII">
    <location>
        <begin position="1"/>
        <end position="263"/>
    </location>
</feature>
<feature type="domain" description="RNase H type-2" evidence="2">
    <location>
        <begin position="71"/>
        <end position="262"/>
    </location>
</feature>
<feature type="binding site" evidence="1">
    <location>
        <position position="77"/>
    </location>
    <ligand>
        <name>a divalent metal cation</name>
        <dbReference type="ChEBI" id="CHEBI:60240"/>
    </ligand>
</feature>
<feature type="binding site" evidence="1">
    <location>
        <position position="78"/>
    </location>
    <ligand>
        <name>a divalent metal cation</name>
        <dbReference type="ChEBI" id="CHEBI:60240"/>
    </ligand>
</feature>
<feature type="binding site" evidence="1">
    <location>
        <position position="172"/>
    </location>
    <ligand>
        <name>a divalent metal cation</name>
        <dbReference type="ChEBI" id="CHEBI:60240"/>
    </ligand>
</feature>